<organism>
    <name type="scientific">Streptococcus suis (strain 05ZYH33)</name>
    <dbReference type="NCBI Taxonomy" id="391295"/>
    <lineage>
        <taxon>Bacteria</taxon>
        <taxon>Bacillati</taxon>
        <taxon>Bacillota</taxon>
        <taxon>Bacilli</taxon>
        <taxon>Lactobacillales</taxon>
        <taxon>Streptococcaceae</taxon>
        <taxon>Streptococcus</taxon>
    </lineage>
</organism>
<evidence type="ECO:0000255" key="1">
    <source>
        <dbReference type="HAMAP-Rule" id="MF_01382"/>
    </source>
</evidence>
<name>SECA_STRSY</name>
<gene>
    <name evidence="1" type="primary">secA</name>
    <name type="ordered locus">SSU05_1814</name>
</gene>
<accession>A4VXE1</accession>
<proteinExistence type="inferred from homology"/>
<comment type="function">
    <text evidence="1">Part of the Sec protein translocase complex. Interacts with the SecYEG preprotein conducting channel. Has a central role in coupling the hydrolysis of ATP to the transfer of proteins into and across the cell membrane, serving as an ATP-driven molecular motor driving the stepwise translocation of polypeptide chains across the membrane.</text>
</comment>
<comment type="catalytic activity">
    <reaction evidence="1">
        <text>ATP + H2O + cellular proteinSide 1 = ADP + phosphate + cellular proteinSide 2.</text>
        <dbReference type="EC" id="7.4.2.8"/>
    </reaction>
</comment>
<comment type="cofactor">
    <cofactor evidence="1">
        <name>Zn(2+)</name>
        <dbReference type="ChEBI" id="CHEBI:29105"/>
    </cofactor>
    <text evidence="1">May bind 1 zinc ion per subunit.</text>
</comment>
<comment type="subunit">
    <text evidence="1">Monomer and homodimer. Part of the essential Sec protein translocation apparatus which comprises SecA, SecYEG and auxiliary proteins SecDF. Other proteins may also be involved.</text>
</comment>
<comment type="subcellular location">
    <subcellularLocation>
        <location evidence="1">Cell membrane</location>
        <topology evidence="1">Peripheral membrane protein</topology>
        <orientation evidence="1">Cytoplasmic side</orientation>
    </subcellularLocation>
    <subcellularLocation>
        <location evidence="1">Cytoplasm</location>
    </subcellularLocation>
    <text evidence="1">Distribution is 50-50.</text>
</comment>
<comment type="similarity">
    <text evidence="1">Belongs to the SecA family.</text>
</comment>
<dbReference type="EC" id="7.4.2.8" evidence="1"/>
<dbReference type="EMBL" id="CP000407">
    <property type="protein sequence ID" value="ABP90780.1"/>
    <property type="molecule type" value="Genomic_DNA"/>
</dbReference>
<dbReference type="SMR" id="A4VXE1"/>
<dbReference type="STRING" id="391295.SSU05_1814"/>
<dbReference type="KEGG" id="ssu:SSU05_1814"/>
<dbReference type="eggNOG" id="COG0653">
    <property type="taxonomic scope" value="Bacteria"/>
</dbReference>
<dbReference type="HOGENOM" id="CLU_005314_3_2_9"/>
<dbReference type="GO" id="GO:0031522">
    <property type="term" value="C:cell envelope Sec protein transport complex"/>
    <property type="evidence" value="ECO:0007669"/>
    <property type="project" value="TreeGrafter"/>
</dbReference>
<dbReference type="GO" id="GO:0005829">
    <property type="term" value="C:cytosol"/>
    <property type="evidence" value="ECO:0007669"/>
    <property type="project" value="TreeGrafter"/>
</dbReference>
<dbReference type="GO" id="GO:0005886">
    <property type="term" value="C:plasma membrane"/>
    <property type="evidence" value="ECO:0007669"/>
    <property type="project" value="UniProtKB-SubCell"/>
</dbReference>
<dbReference type="GO" id="GO:0005524">
    <property type="term" value="F:ATP binding"/>
    <property type="evidence" value="ECO:0007669"/>
    <property type="project" value="UniProtKB-UniRule"/>
</dbReference>
<dbReference type="GO" id="GO:0046872">
    <property type="term" value="F:metal ion binding"/>
    <property type="evidence" value="ECO:0007669"/>
    <property type="project" value="UniProtKB-KW"/>
</dbReference>
<dbReference type="GO" id="GO:0008564">
    <property type="term" value="F:protein-exporting ATPase activity"/>
    <property type="evidence" value="ECO:0007669"/>
    <property type="project" value="UniProtKB-EC"/>
</dbReference>
<dbReference type="GO" id="GO:0065002">
    <property type="term" value="P:intracellular protein transmembrane transport"/>
    <property type="evidence" value="ECO:0007669"/>
    <property type="project" value="UniProtKB-UniRule"/>
</dbReference>
<dbReference type="GO" id="GO:0017038">
    <property type="term" value="P:protein import"/>
    <property type="evidence" value="ECO:0007669"/>
    <property type="project" value="InterPro"/>
</dbReference>
<dbReference type="GO" id="GO:0006605">
    <property type="term" value="P:protein targeting"/>
    <property type="evidence" value="ECO:0007669"/>
    <property type="project" value="UniProtKB-UniRule"/>
</dbReference>
<dbReference type="GO" id="GO:0043952">
    <property type="term" value="P:protein transport by the Sec complex"/>
    <property type="evidence" value="ECO:0007669"/>
    <property type="project" value="TreeGrafter"/>
</dbReference>
<dbReference type="CDD" id="cd17928">
    <property type="entry name" value="DEXDc_SecA"/>
    <property type="match status" value="1"/>
</dbReference>
<dbReference type="CDD" id="cd18803">
    <property type="entry name" value="SF2_C_secA"/>
    <property type="match status" value="1"/>
</dbReference>
<dbReference type="FunFam" id="1.10.3060.10:FF:000002">
    <property type="entry name" value="Preprotein translocase subunit SecA"/>
    <property type="match status" value="1"/>
</dbReference>
<dbReference type="FunFam" id="3.40.50.300:FF:000429">
    <property type="entry name" value="Preprotein translocase subunit SecA"/>
    <property type="match status" value="1"/>
</dbReference>
<dbReference type="FunFam" id="3.90.1440.10:FF:000001">
    <property type="entry name" value="Preprotein translocase subunit SecA"/>
    <property type="match status" value="1"/>
</dbReference>
<dbReference type="Gene3D" id="1.10.3060.10">
    <property type="entry name" value="Helical scaffold and wing domains of SecA"/>
    <property type="match status" value="1"/>
</dbReference>
<dbReference type="Gene3D" id="3.40.50.300">
    <property type="entry name" value="P-loop containing nucleotide triphosphate hydrolases"/>
    <property type="match status" value="2"/>
</dbReference>
<dbReference type="Gene3D" id="3.90.1440.10">
    <property type="entry name" value="SecA, preprotein cross-linking domain"/>
    <property type="match status" value="1"/>
</dbReference>
<dbReference type="HAMAP" id="MF_01382">
    <property type="entry name" value="SecA"/>
    <property type="match status" value="1"/>
</dbReference>
<dbReference type="InterPro" id="IPR014001">
    <property type="entry name" value="Helicase_ATP-bd"/>
</dbReference>
<dbReference type="InterPro" id="IPR001650">
    <property type="entry name" value="Helicase_C-like"/>
</dbReference>
<dbReference type="InterPro" id="IPR027417">
    <property type="entry name" value="P-loop_NTPase"/>
</dbReference>
<dbReference type="InterPro" id="IPR004027">
    <property type="entry name" value="SEC_C_motif"/>
</dbReference>
<dbReference type="InterPro" id="IPR000185">
    <property type="entry name" value="SecA"/>
</dbReference>
<dbReference type="InterPro" id="IPR020937">
    <property type="entry name" value="SecA_CS"/>
</dbReference>
<dbReference type="InterPro" id="IPR011115">
    <property type="entry name" value="SecA_DEAD"/>
</dbReference>
<dbReference type="InterPro" id="IPR014018">
    <property type="entry name" value="SecA_motor_DEAD"/>
</dbReference>
<dbReference type="InterPro" id="IPR011130">
    <property type="entry name" value="SecA_preprotein_X-link_dom"/>
</dbReference>
<dbReference type="InterPro" id="IPR044722">
    <property type="entry name" value="SecA_SF2_C"/>
</dbReference>
<dbReference type="InterPro" id="IPR011116">
    <property type="entry name" value="SecA_Wing/Scaffold"/>
</dbReference>
<dbReference type="InterPro" id="IPR036266">
    <property type="entry name" value="SecA_Wing/Scaffold_sf"/>
</dbReference>
<dbReference type="InterPro" id="IPR036670">
    <property type="entry name" value="SecA_X-link_sf"/>
</dbReference>
<dbReference type="NCBIfam" id="NF006630">
    <property type="entry name" value="PRK09200.1"/>
    <property type="match status" value="1"/>
</dbReference>
<dbReference type="NCBIfam" id="TIGR00963">
    <property type="entry name" value="secA"/>
    <property type="match status" value="1"/>
</dbReference>
<dbReference type="PANTHER" id="PTHR30612:SF0">
    <property type="entry name" value="CHLOROPLAST PROTEIN-TRANSPORTING ATPASE"/>
    <property type="match status" value="1"/>
</dbReference>
<dbReference type="PANTHER" id="PTHR30612">
    <property type="entry name" value="SECA INNER MEMBRANE COMPONENT OF SEC PROTEIN SECRETION SYSTEM"/>
    <property type="match status" value="1"/>
</dbReference>
<dbReference type="Pfam" id="PF21090">
    <property type="entry name" value="P-loop_SecA"/>
    <property type="match status" value="2"/>
</dbReference>
<dbReference type="Pfam" id="PF02810">
    <property type="entry name" value="SEC-C"/>
    <property type="match status" value="1"/>
</dbReference>
<dbReference type="Pfam" id="PF07517">
    <property type="entry name" value="SecA_DEAD"/>
    <property type="match status" value="1"/>
</dbReference>
<dbReference type="Pfam" id="PF01043">
    <property type="entry name" value="SecA_PP_bind"/>
    <property type="match status" value="1"/>
</dbReference>
<dbReference type="Pfam" id="PF07516">
    <property type="entry name" value="SecA_SW"/>
    <property type="match status" value="1"/>
</dbReference>
<dbReference type="PRINTS" id="PR00906">
    <property type="entry name" value="SECA"/>
</dbReference>
<dbReference type="SMART" id="SM00957">
    <property type="entry name" value="SecA_DEAD"/>
    <property type="match status" value="1"/>
</dbReference>
<dbReference type="SMART" id="SM00958">
    <property type="entry name" value="SecA_PP_bind"/>
    <property type="match status" value="1"/>
</dbReference>
<dbReference type="SUPFAM" id="SSF81886">
    <property type="entry name" value="Helical scaffold and wing domains of SecA"/>
    <property type="match status" value="1"/>
</dbReference>
<dbReference type="SUPFAM" id="SSF52540">
    <property type="entry name" value="P-loop containing nucleoside triphosphate hydrolases"/>
    <property type="match status" value="2"/>
</dbReference>
<dbReference type="SUPFAM" id="SSF81767">
    <property type="entry name" value="Pre-protein crosslinking domain of SecA"/>
    <property type="match status" value="1"/>
</dbReference>
<dbReference type="PROSITE" id="PS01312">
    <property type="entry name" value="SECA"/>
    <property type="match status" value="1"/>
</dbReference>
<dbReference type="PROSITE" id="PS51196">
    <property type="entry name" value="SECA_MOTOR_DEAD"/>
    <property type="match status" value="1"/>
</dbReference>
<protein>
    <recommendedName>
        <fullName evidence="1">Protein translocase subunit SecA</fullName>
        <ecNumber evidence="1">7.4.2.8</ecNumber>
    </recommendedName>
</protein>
<feature type="chain" id="PRO_0000318458" description="Protein translocase subunit SecA">
    <location>
        <begin position="1"/>
        <end position="844"/>
    </location>
</feature>
<feature type="binding site" evidence="1">
    <location>
        <position position="89"/>
    </location>
    <ligand>
        <name>ATP</name>
        <dbReference type="ChEBI" id="CHEBI:30616"/>
    </ligand>
</feature>
<feature type="binding site" evidence="1">
    <location>
        <begin position="107"/>
        <end position="111"/>
    </location>
    <ligand>
        <name>ATP</name>
        <dbReference type="ChEBI" id="CHEBI:30616"/>
    </ligand>
</feature>
<feature type="binding site" evidence="1">
    <location>
        <position position="497"/>
    </location>
    <ligand>
        <name>ATP</name>
        <dbReference type="ChEBI" id="CHEBI:30616"/>
    </ligand>
</feature>
<feature type="binding site" evidence="1">
    <location>
        <position position="829"/>
    </location>
    <ligand>
        <name>Zn(2+)</name>
        <dbReference type="ChEBI" id="CHEBI:29105"/>
    </ligand>
</feature>
<feature type="binding site" evidence="1">
    <location>
        <position position="831"/>
    </location>
    <ligand>
        <name>Zn(2+)</name>
        <dbReference type="ChEBI" id="CHEBI:29105"/>
    </ligand>
</feature>
<feature type="binding site" evidence="1">
    <location>
        <position position="840"/>
    </location>
    <ligand>
        <name>Zn(2+)</name>
        <dbReference type="ChEBI" id="CHEBI:29105"/>
    </ligand>
</feature>
<feature type="binding site" evidence="1">
    <location>
        <position position="841"/>
    </location>
    <ligand>
        <name>Zn(2+)</name>
        <dbReference type="ChEBI" id="CHEBI:29105"/>
    </ligand>
</feature>
<keyword id="KW-0067">ATP-binding</keyword>
<keyword id="KW-1003">Cell membrane</keyword>
<keyword id="KW-0963">Cytoplasm</keyword>
<keyword id="KW-0472">Membrane</keyword>
<keyword id="KW-0479">Metal-binding</keyword>
<keyword id="KW-0547">Nucleotide-binding</keyword>
<keyword id="KW-0653">Protein transport</keyword>
<keyword id="KW-1278">Translocase</keyword>
<keyword id="KW-0811">Translocation</keyword>
<keyword id="KW-0813">Transport</keyword>
<keyword id="KW-0862">Zinc</keyword>
<reference key="1">
    <citation type="journal article" date="2007" name="PLoS ONE">
        <title>A glimpse of streptococcal toxic shock syndrome from comparative genomics of S. suis 2 Chinese isolates.</title>
        <authorList>
            <person name="Chen C."/>
            <person name="Tang J."/>
            <person name="Dong W."/>
            <person name="Wang C."/>
            <person name="Feng Y."/>
            <person name="Wang J."/>
            <person name="Zheng F."/>
            <person name="Pan X."/>
            <person name="Liu D."/>
            <person name="Li M."/>
            <person name="Song Y."/>
            <person name="Zhu X."/>
            <person name="Sun H."/>
            <person name="Feng T."/>
            <person name="Guo Z."/>
            <person name="Ju A."/>
            <person name="Ge J."/>
            <person name="Dong Y."/>
            <person name="Sun W."/>
            <person name="Jiang Y."/>
            <person name="Wang J."/>
            <person name="Yan J."/>
            <person name="Yang H."/>
            <person name="Wang X."/>
            <person name="Gao G.F."/>
            <person name="Yang R."/>
            <person name="Wang J."/>
            <person name="Yu J."/>
        </authorList>
    </citation>
    <scope>NUCLEOTIDE SEQUENCE [LARGE SCALE GENOMIC DNA]</scope>
    <source>
        <strain>05ZYH33</strain>
    </source>
</reference>
<sequence length="844" mass="96026">MKCMVTNVLRSLIENDKGELRKLEKMADKVFSYADEMEALTDEQLQAKTAEFKERYNNGESLDDLLYEAYAVVREGARRVLGLYPYKVQVMGGIVLHNGDVPEMRTGEGKTLTATMPVYLNALSGQGVHVVTVNEYLSTRDATEMGELYSWLGLSVGINLAAKSPLEKREAYNCDITYSTNSEIGFDYLRDNMVVRAEDMVQRPLNYALVDEVDSILIDEARTPLIVSGAQGSETNQLYFLADNLVKSLTTEDYIIDIPSKTIGLSDSGIDKAEKFFKLDNLYDIENVAITHFLDNALRANYIMTYDIDYLVNEDQEVMIIDPFTGRTMEGRRYSDGLHQAIEAKEGVPVQNESKTSASITYQNLFRMYKKLSGMTGTGKTEEEEFREIYNIRVVPIPTNRPIARVDHEDLLYPSLEYKFNAVIADVKRRYEKGQPVLVGTVAVETSDLISQKLVAAGVPHEVLNAKNHYREAQIIMNAGQRGAVTIATNMAGRGTDIKLGPGVRELGGLCVIGTERHESRRIDNQLRGRSGRQGDPGESQFYLSLEDDLMKRFGSERIKVFMERMNLTEEESVIKSKMLTRQVESAQKRVEGNNYDSRKQVLQYDDVMREQREIIYRQRQDVITADRDLAPEIKAMMKRTIERQVAGHFLGSKDEAIDGIIKFAHANLVEDDTLSKATFEAMNQKEIVEELYERALRVYDSQVKKLRDEERVREFQKVLILRVVDNKWTDHIDALDQLRNAVSLRGYAQNNPIVEYQSEAFTMFNDMIGAIEFEVTRLMMKAQIHDNIERERTSQEAHTTAVKNIMPNQSHAIQENVSFEGVDRNDPCPCQSGKKFKNCHGRK</sequence>